<accession>Q5HQ23</accession>
<dbReference type="EC" id="3.6.1.66" evidence="1"/>
<dbReference type="EMBL" id="CP000029">
    <property type="protein sequence ID" value="AAW54107.1"/>
    <property type="molecule type" value="Genomic_DNA"/>
</dbReference>
<dbReference type="RefSeq" id="WP_002446216.1">
    <property type="nucleotide sequence ID" value="NC_002976.3"/>
</dbReference>
<dbReference type="SMR" id="Q5HQ23"/>
<dbReference type="STRING" id="176279.SERP0734"/>
<dbReference type="KEGG" id="ser:SERP0734"/>
<dbReference type="eggNOG" id="COG0127">
    <property type="taxonomic scope" value="Bacteria"/>
</dbReference>
<dbReference type="HOGENOM" id="CLU_082080_0_2_9"/>
<dbReference type="Proteomes" id="UP000000531">
    <property type="component" value="Chromosome"/>
</dbReference>
<dbReference type="GO" id="GO:0005829">
    <property type="term" value="C:cytosol"/>
    <property type="evidence" value="ECO:0007669"/>
    <property type="project" value="TreeGrafter"/>
</dbReference>
<dbReference type="GO" id="GO:0035870">
    <property type="term" value="F:dITP diphosphatase activity"/>
    <property type="evidence" value="ECO:0007669"/>
    <property type="project" value="RHEA"/>
</dbReference>
<dbReference type="GO" id="GO:0036220">
    <property type="term" value="F:ITP diphosphatase activity"/>
    <property type="evidence" value="ECO:0007669"/>
    <property type="project" value="UniProtKB-EC"/>
</dbReference>
<dbReference type="GO" id="GO:0046872">
    <property type="term" value="F:metal ion binding"/>
    <property type="evidence" value="ECO:0007669"/>
    <property type="project" value="UniProtKB-KW"/>
</dbReference>
<dbReference type="GO" id="GO:0000166">
    <property type="term" value="F:nucleotide binding"/>
    <property type="evidence" value="ECO:0007669"/>
    <property type="project" value="UniProtKB-KW"/>
</dbReference>
<dbReference type="GO" id="GO:0017111">
    <property type="term" value="F:ribonucleoside triphosphate phosphatase activity"/>
    <property type="evidence" value="ECO:0007669"/>
    <property type="project" value="InterPro"/>
</dbReference>
<dbReference type="GO" id="GO:0036222">
    <property type="term" value="F:XTP diphosphatase activity"/>
    <property type="evidence" value="ECO:0007669"/>
    <property type="project" value="RHEA"/>
</dbReference>
<dbReference type="GO" id="GO:0009117">
    <property type="term" value="P:nucleotide metabolic process"/>
    <property type="evidence" value="ECO:0007669"/>
    <property type="project" value="UniProtKB-KW"/>
</dbReference>
<dbReference type="GO" id="GO:0009146">
    <property type="term" value="P:purine nucleoside triphosphate catabolic process"/>
    <property type="evidence" value="ECO:0007669"/>
    <property type="project" value="UniProtKB-UniRule"/>
</dbReference>
<dbReference type="CDD" id="cd00515">
    <property type="entry name" value="HAM1"/>
    <property type="match status" value="1"/>
</dbReference>
<dbReference type="FunFam" id="3.90.950.10:FF:000001">
    <property type="entry name" value="dITP/XTP pyrophosphatase"/>
    <property type="match status" value="1"/>
</dbReference>
<dbReference type="Gene3D" id="3.90.950.10">
    <property type="match status" value="1"/>
</dbReference>
<dbReference type="HAMAP" id="MF_01405">
    <property type="entry name" value="Non_canon_purine_NTPase"/>
    <property type="match status" value="1"/>
</dbReference>
<dbReference type="InterPro" id="IPR020922">
    <property type="entry name" value="dITP/XTP_pyrophosphatase"/>
</dbReference>
<dbReference type="InterPro" id="IPR029001">
    <property type="entry name" value="ITPase-like_fam"/>
</dbReference>
<dbReference type="InterPro" id="IPR002637">
    <property type="entry name" value="RdgB/HAM1"/>
</dbReference>
<dbReference type="NCBIfam" id="NF011397">
    <property type="entry name" value="PRK14822.1"/>
    <property type="match status" value="1"/>
</dbReference>
<dbReference type="NCBIfam" id="TIGR00042">
    <property type="entry name" value="RdgB/HAM1 family non-canonical purine NTP pyrophosphatase"/>
    <property type="match status" value="1"/>
</dbReference>
<dbReference type="PANTHER" id="PTHR11067:SF9">
    <property type="entry name" value="INOSINE TRIPHOSPHATE PYROPHOSPHATASE"/>
    <property type="match status" value="1"/>
</dbReference>
<dbReference type="PANTHER" id="PTHR11067">
    <property type="entry name" value="INOSINE TRIPHOSPHATE PYROPHOSPHATASE/HAM1 PROTEIN"/>
    <property type="match status" value="1"/>
</dbReference>
<dbReference type="Pfam" id="PF01725">
    <property type="entry name" value="Ham1p_like"/>
    <property type="match status" value="1"/>
</dbReference>
<dbReference type="SUPFAM" id="SSF52972">
    <property type="entry name" value="ITPase-like"/>
    <property type="match status" value="1"/>
</dbReference>
<evidence type="ECO:0000255" key="1">
    <source>
        <dbReference type="HAMAP-Rule" id="MF_01405"/>
    </source>
</evidence>
<gene>
    <name type="ordered locus">SERP0734</name>
</gene>
<proteinExistence type="inferred from homology"/>
<protein>
    <recommendedName>
        <fullName evidence="1">dITP/XTP pyrophosphatase</fullName>
        <ecNumber evidence="1">3.6.1.66</ecNumber>
    </recommendedName>
    <alternativeName>
        <fullName evidence="1">Non-canonical purine NTP pyrophosphatase</fullName>
    </alternativeName>
    <alternativeName>
        <fullName evidence="1">Non-standard purine NTP pyrophosphatase</fullName>
    </alternativeName>
    <alternativeName>
        <fullName evidence="1">Nucleoside-triphosphate diphosphatase</fullName>
    </alternativeName>
    <alternativeName>
        <fullName evidence="1">Nucleoside-triphosphate pyrophosphatase</fullName>
        <shortName evidence="1">NTPase</shortName>
    </alternativeName>
</protein>
<comment type="function">
    <text evidence="1">Pyrophosphatase that catalyzes the hydrolysis of nucleoside triphosphates to their monophosphate derivatives, with a high preference for the non-canonical purine nucleotides XTP (xanthosine triphosphate), dITP (deoxyinosine triphosphate) and ITP. Seems to function as a house-cleaning enzyme that removes non-canonical purine nucleotides from the nucleotide pool, thus preventing their incorporation into DNA/RNA and avoiding chromosomal lesions.</text>
</comment>
<comment type="catalytic activity">
    <reaction evidence="1">
        <text>XTP + H2O = XMP + diphosphate + H(+)</text>
        <dbReference type="Rhea" id="RHEA:28610"/>
        <dbReference type="ChEBI" id="CHEBI:15377"/>
        <dbReference type="ChEBI" id="CHEBI:15378"/>
        <dbReference type="ChEBI" id="CHEBI:33019"/>
        <dbReference type="ChEBI" id="CHEBI:57464"/>
        <dbReference type="ChEBI" id="CHEBI:61314"/>
        <dbReference type="EC" id="3.6.1.66"/>
    </reaction>
</comment>
<comment type="catalytic activity">
    <reaction evidence="1">
        <text>dITP + H2O = dIMP + diphosphate + H(+)</text>
        <dbReference type="Rhea" id="RHEA:28342"/>
        <dbReference type="ChEBI" id="CHEBI:15377"/>
        <dbReference type="ChEBI" id="CHEBI:15378"/>
        <dbReference type="ChEBI" id="CHEBI:33019"/>
        <dbReference type="ChEBI" id="CHEBI:61194"/>
        <dbReference type="ChEBI" id="CHEBI:61382"/>
        <dbReference type="EC" id="3.6.1.66"/>
    </reaction>
</comment>
<comment type="catalytic activity">
    <reaction evidence="1">
        <text>ITP + H2O = IMP + diphosphate + H(+)</text>
        <dbReference type="Rhea" id="RHEA:29399"/>
        <dbReference type="ChEBI" id="CHEBI:15377"/>
        <dbReference type="ChEBI" id="CHEBI:15378"/>
        <dbReference type="ChEBI" id="CHEBI:33019"/>
        <dbReference type="ChEBI" id="CHEBI:58053"/>
        <dbReference type="ChEBI" id="CHEBI:61402"/>
        <dbReference type="EC" id="3.6.1.66"/>
    </reaction>
</comment>
<comment type="cofactor">
    <cofactor evidence="1">
        <name>Mg(2+)</name>
        <dbReference type="ChEBI" id="CHEBI:18420"/>
    </cofactor>
    <text evidence="1">Binds 1 Mg(2+) ion per subunit.</text>
</comment>
<comment type="subunit">
    <text evidence="1">Homodimer.</text>
</comment>
<comment type="similarity">
    <text evidence="1">Belongs to the HAM1 NTPase family.</text>
</comment>
<keyword id="KW-0378">Hydrolase</keyword>
<keyword id="KW-0460">Magnesium</keyword>
<keyword id="KW-0479">Metal-binding</keyword>
<keyword id="KW-0546">Nucleotide metabolism</keyword>
<keyword id="KW-0547">Nucleotide-binding</keyword>
<keyword id="KW-1185">Reference proteome</keyword>
<feature type="chain" id="PRO_0000178234" description="dITP/XTP pyrophosphatase">
    <location>
        <begin position="1"/>
        <end position="195"/>
    </location>
</feature>
<feature type="active site" description="Proton acceptor" evidence="1">
    <location>
        <position position="68"/>
    </location>
</feature>
<feature type="binding site" evidence="1">
    <location>
        <begin position="8"/>
        <end position="13"/>
    </location>
    <ligand>
        <name>substrate</name>
    </ligand>
</feature>
<feature type="binding site" evidence="1">
    <location>
        <position position="39"/>
    </location>
    <ligand>
        <name>Mg(2+)</name>
        <dbReference type="ChEBI" id="CHEBI:18420"/>
    </ligand>
</feature>
<feature type="binding site" evidence="1">
    <location>
        <position position="68"/>
    </location>
    <ligand>
        <name>Mg(2+)</name>
        <dbReference type="ChEBI" id="CHEBI:18420"/>
    </ligand>
</feature>
<feature type="binding site" evidence="1">
    <location>
        <position position="69"/>
    </location>
    <ligand>
        <name>substrate</name>
    </ligand>
</feature>
<feature type="binding site" evidence="1">
    <location>
        <begin position="149"/>
        <end position="152"/>
    </location>
    <ligand>
        <name>substrate</name>
    </ligand>
</feature>
<feature type="binding site" evidence="1">
    <location>
        <position position="172"/>
    </location>
    <ligand>
        <name>substrate</name>
    </ligand>
</feature>
<feature type="binding site" evidence="1">
    <location>
        <begin position="177"/>
        <end position="178"/>
    </location>
    <ligand>
        <name>substrate</name>
    </ligand>
</feature>
<sequence>MEDIVIATNNQGKINDFKAIFKNQNVIGISELIEDFDVEETGATFEENAKLKSEAAAHALNKRVIADDSGLEVFALNGEPGVYSARYAGLGKNDEDNIEKLLTNLEDVQDRRAQFVCVISMSAPNEKTKTFKGTVSGVITTERHGKNGFGYDPIFFVPELNKTMAEITNDEKGKISHRGNAILLLKEYLEGEQHV</sequence>
<name>IXTPA_STAEQ</name>
<reference key="1">
    <citation type="journal article" date="2005" name="J. Bacteriol.">
        <title>Insights on evolution of virulence and resistance from the complete genome analysis of an early methicillin-resistant Staphylococcus aureus strain and a biofilm-producing methicillin-resistant Staphylococcus epidermidis strain.</title>
        <authorList>
            <person name="Gill S.R."/>
            <person name="Fouts D.E."/>
            <person name="Archer G.L."/>
            <person name="Mongodin E.F."/>
            <person name="DeBoy R.T."/>
            <person name="Ravel J."/>
            <person name="Paulsen I.T."/>
            <person name="Kolonay J.F."/>
            <person name="Brinkac L.M."/>
            <person name="Beanan M.J."/>
            <person name="Dodson R.J."/>
            <person name="Daugherty S.C."/>
            <person name="Madupu R."/>
            <person name="Angiuoli S.V."/>
            <person name="Durkin A.S."/>
            <person name="Haft D.H."/>
            <person name="Vamathevan J.J."/>
            <person name="Khouri H."/>
            <person name="Utterback T.R."/>
            <person name="Lee C."/>
            <person name="Dimitrov G."/>
            <person name="Jiang L."/>
            <person name="Qin H."/>
            <person name="Weidman J."/>
            <person name="Tran K."/>
            <person name="Kang K.H."/>
            <person name="Hance I.R."/>
            <person name="Nelson K.E."/>
            <person name="Fraser C.M."/>
        </authorList>
    </citation>
    <scope>NUCLEOTIDE SEQUENCE [LARGE SCALE GENOMIC DNA]</scope>
    <source>
        <strain>ATCC 35984 / DSM 28319 / BCRC 17069 / CCUG 31568 / BM 3577 / RP62A</strain>
    </source>
</reference>
<organism>
    <name type="scientific">Staphylococcus epidermidis (strain ATCC 35984 / DSM 28319 / BCRC 17069 / CCUG 31568 / BM 3577 / RP62A)</name>
    <dbReference type="NCBI Taxonomy" id="176279"/>
    <lineage>
        <taxon>Bacteria</taxon>
        <taxon>Bacillati</taxon>
        <taxon>Bacillota</taxon>
        <taxon>Bacilli</taxon>
        <taxon>Bacillales</taxon>
        <taxon>Staphylococcaceae</taxon>
        <taxon>Staphylococcus</taxon>
    </lineage>
</organism>